<dbReference type="EMBL" id="M81648">
    <property type="protein sequence ID" value="AAA27615.1"/>
    <property type="molecule type" value="Genomic_DNA"/>
</dbReference>
<dbReference type="EMBL" id="AE008922">
    <property type="protein sequence ID" value="AAM39986.1"/>
    <property type="molecule type" value="Genomic_DNA"/>
</dbReference>
<dbReference type="PIR" id="C41843">
    <property type="entry name" value="C41843"/>
</dbReference>
<dbReference type="RefSeq" id="NP_636062.1">
    <property type="nucleotide sequence ID" value="NC_003902.1"/>
</dbReference>
<dbReference type="SMR" id="P29041"/>
<dbReference type="STRING" id="190485.XCC0670"/>
<dbReference type="EnsemblBacteria" id="AAM39986">
    <property type="protein sequence ID" value="AAM39986"/>
    <property type="gene ID" value="XCC0670"/>
</dbReference>
<dbReference type="KEGG" id="xcc:XCC0670"/>
<dbReference type="PATRIC" id="fig|190485.4.peg.735"/>
<dbReference type="eggNOG" id="COG1450">
    <property type="taxonomic scope" value="Bacteria"/>
</dbReference>
<dbReference type="HOGENOM" id="CLU_006756_1_2_6"/>
<dbReference type="OrthoDB" id="9775455at2"/>
<dbReference type="Proteomes" id="UP000001010">
    <property type="component" value="Chromosome"/>
</dbReference>
<dbReference type="GO" id="GO:0009279">
    <property type="term" value="C:cell outer membrane"/>
    <property type="evidence" value="ECO:0007669"/>
    <property type="project" value="UniProtKB-SubCell"/>
</dbReference>
<dbReference type="GO" id="GO:0015627">
    <property type="term" value="C:type II protein secretion system complex"/>
    <property type="evidence" value="ECO:0000318"/>
    <property type="project" value="GO_Central"/>
</dbReference>
<dbReference type="GO" id="GO:0009306">
    <property type="term" value="P:protein secretion"/>
    <property type="evidence" value="ECO:0000318"/>
    <property type="project" value="GO_Central"/>
</dbReference>
<dbReference type="GO" id="GO:0015628">
    <property type="term" value="P:protein secretion by the type II secretion system"/>
    <property type="evidence" value="ECO:0007669"/>
    <property type="project" value="InterPro"/>
</dbReference>
<dbReference type="Gene3D" id="3.30.1370.120">
    <property type="match status" value="3"/>
</dbReference>
<dbReference type="InterPro" id="IPR050810">
    <property type="entry name" value="Bact_Secretion_Sys_Channel"/>
</dbReference>
<dbReference type="InterPro" id="IPR049371">
    <property type="entry name" value="GspD-like_N0"/>
</dbReference>
<dbReference type="InterPro" id="IPR001775">
    <property type="entry name" value="GspD/PilQ"/>
</dbReference>
<dbReference type="InterPro" id="IPR005644">
    <property type="entry name" value="NolW-like"/>
</dbReference>
<dbReference type="InterPro" id="IPR038591">
    <property type="entry name" value="NolW-like_sf"/>
</dbReference>
<dbReference type="InterPro" id="IPR004846">
    <property type="entry name" value="T2SS/T3SS_dom"/>
</dbReference>
<dbReference type="InterPro" id="IPR013356">
    <property type="entry name" value="T2SS_GspD"/>
</dbReference>
<dbReference type="InterPro" id="IPR004845">
    <property type="entry name" value="T2SS_GspD_CS"/>
</dbReference>
<dbReference type="NCBIfam" id="TIGR02517">
    <property type="entry name" value="type_II_gspD"/>
    <property type="match status" value="1"/>
</dbReference>
<dbReference type="PANTHER" id="PTHR30332">
    <property type="entry name" value="PROBABLE GENERAL SECRETION PATHWAY PROTEIN D"/>
    <property type="match status" value="1"/>
</dbReference>
<dbReference type="PANTHER" id="PTHR30332:SF25">
    <property type="entry name" value="SECRETIN XPSD"/>
    <property type="match status" value="1"/>
</dbReference>
<dbReference type="Pfam" id="PF00263">
    <property type="entry name" value="Secretin"/>
    <property type="match status" value="1"/>
</dbReference>
<dbReference type="Pfam" id="PF03958">
    <property type="entry name" value="Secretin_N"/>
    <property type="match status" value="3"/>
</dbReference>
<dbReference type="Pfam" id="PF21305">
    <property type="entry name" value="type_II_gspD_N0"/>
    <property type="match status" value="1"/>
</dbReference>
<dbReference type="PRINTS" id="PR00811">
    <property type="entry name" value="BCTERIALGSPD"/>
</dbReference>
<dbReference type="PROSITE" id="PS51257">
    <property type="entry name" value="PROKAR_LIPOPROTEIN"/>
    <property type="match status" value="1"/>
</dbReference>
<dbReference type="PROSITE" id="PS00875">
    <property type="entry name" value="T2SP_D"/>
    <property type="match status" value="1"/>
</dbReference>
<proteinExistence type="evidence at protein level"/>
<evidence type="ECO:0000250" key="1">
    <source>
        <dbReference type="UniProtKB" id="P45779"/>
    </source>
</evidence>
<evidence type="ECO:0000255" key="2">
    <source>
        <dbReference type="PROSITE-ProRule" id="PRU00303"/>
    </source>
</evidence>
<evidence type="ECO:0000256" key="3">
    <source>
        <dbReference type="SAM" id="MobiDB-lite"/>
    </source>
</evidence>
<evidence type="ECO:0000269" key="4">
    <source>
    </source>
</evidence>
<evidence type="ECO:0000305" key="5"/>
<feature type="signal peptide" evidence="2">
    <location>
        <begin position="1"/>
        <end position="21"/>
    </location>
</feature>
<feature type="chain" id="PRO_0000013106" description="Secretin XpsD">
    <location>
        <begin position="22"/>
        <end position="759"/>
    </location>
</feature>
<feature type="region of interest" description="Disordered" evidence="3">
    <location>
        <begin position="40"/>
        <end position="69"/>
    </location>
</feature>
<feature type="region of interest" description="N0" evidence="1">
    <location>
        <begin position="92"/>
        <end position="187"/>
    </location>
</feature>
<feature type="region of interest" description="N1" evidence="1">
    <location>
        <begin position="189"/>
        <end position="253"/>
    </location>
</feature>
<feature type="region of interest" description="N2" evidence="1">
    <location>
        <begin position="254"/>
        <end position="323"/>
    </location>
</feature>
<feature type="region of interest" description="N3" evidence="1">
    <location>
        <begin position="326"/>
        <end position="474"/>
    </location>
</feature>
<feature type="region of interest" description="Disordered" evidence="3">
    <location>
        <begin position="352"/>
        <end position="434"/>
    </location>
</feature>
<feature type="region of interest" description="Secretin" evidence="1">
    <location>
        <begin position="479"/>
        <end position="734"/>
    </location>
</feature>
<feature type="region of interest" description="S domain" evidence="1">
    <location>
        <begin position="736"/>
        <end position="759"/>
    </location>
</feature>
<feature type="compositionally biased region" description="Low complexity" evidence="3">
    <location>
        <begin position="40"/>
        <end position="51"/>
    </location>
</feature>
<feature type="compositionally biased region" description="Gly residues" evidence="3">
    <location>
        <begin position="392"/>
        <end position="401"/>
    </location>
</feature>
<feature type="compositionally biased region" description="Polar residues" evidence="3">
    <location>
        <begin position="425"/>
        <end position="434"/>
    </location>
</feature>
<feature type="site" description="May serve as a pivot that allows opening of the central gate for substrate egress" evidence="1">
    <location>
        <position position="585"/>
    </location>
</feature>
<feature type="lipid moiety-binding region" description="N-palmitoyl cysteine" evidence="2">
    <location>
        <position position="22"/>
    </location>
</feature>
<feature type="lipid moiety-binding region" description="S-diacylglycerol cysteine" evidence="2">
    <location>
        <position position="22"/>
    </location>
</feature>
<name>GSPD_XANCP</name>
<sequence>MSERMTPRLFPVSLLIGLLAGCATTPPPDVRRDARLDPQVGAAGATQTTAEQRADGNASAKPTPVIRRGSGTMINQSAAAAPSPTLGMASSGSATFNFEGESVQAVVKAILGDMLGQNYVIAPGVQGTVTLATPNPVSPAQALNLLEMVLGWNNARMVFSGGRYNIVPADQALAGTVAPSTASPSAARGFEVRVVPLKYISASEMKKVLEPYARPNAIVGTDASRNVITLGGTRAELENYLRTVQIFDVDWLSGMSVGVFPIQSGKAEKISADLEKVFGEQSKTPSAGMFRFMPLENANAVLVITPQPRYLDQIQQWLDRIDSAGGGVRLFSYELKYIKAKDLADRLSEVFGGRGNGGNSGPSLVPGGVVNMLGNNSGGADRDESLGSSSGATGGDIGGTSNGSSQSGTSGSFGGSSGSGMLQLPPSTNQNGSVTLEVEGDKVGVSAVAETNTLLVRTSAQAWKSIRDVIEKLDVMPMQVHIEAQIAEVTLTGRLQYGVNWYFENAVTTPSNADGSGGPNLPSAAGRGIWGDVSGSVTSNGVAWTFLGKNAAAIISALDQVTNLRLLQTPSVFVRNNAEATLNVGSRIPINSTSINTGLGSDSSFSSVQYIDTGVILKVRPRVTKDGMVFLDIVQEVSTPGARPAACTAAATTTVNSAACNVDINTRRVKTEAAVQNGDTIMLAGLIDDSTTDGSNGIPFLSKLPVVGALFGRKTQNSDRREVIVLITPSIVRNPQDARDLTDEYGSKFKSMRPMDVHK</sequence>
<organism>
    <name type="scientific">Xanthomonas campestris pv. campestris (strain ATCC 33913 / DSM 3586 / NCPPB 528 / LMG 568 / P 25)</name>
    <dbReference type="NCBI Taxonomy" id="190485"/>
    <lineage>
        <taxon>Bacteria</taxon>
        <taxon>Pseudomonadati</taxon>
        <taxon>Pseudomonadota</taxon>
        <taxon>Gammaproteobacteria</taxon>
        <taxon>Lysobacterales</taxon>
        <taxon>Lysobacteraceae</taxon>
        <taxon>Xanthomonas</taxon>
    </lineage>
</organism>
<reference key="1">
    <citation type="journal article" date="1992" name="J. Bacteriol.">
        <title>Cloning and characterization of a gene required for the secretion of extracellular enzymes across the outer membrane by Xanthomonas campestris pv. campestris.</title>
        <authorList>
            <person name="Hu N.-T."/>
            <person name="Hung M.-N."/>
            <person name="Chiou S.-J."/>
            <person name="Tang F."/>
            <person name="Chiang D.-C."/>
            <person name="Huang H.-Y."/>
            <person name="Wu C.-Y."/>
        </authorList>
    </citation>
    <scope>NUCLEOTIDE SEQUENCE [GENOMIC DNA]</scope>
</reference>
<reference key="2">
    <citation type="journal article" date="2002" name="Nature">
        <title>Comparison of the genomes of two Xanthomonas pathogens with differing host specificities.</title>
        <authorList>
            <person name="da Silva A.C.R."/>
            <person name="Ferro J.A."/>
            <person name="Reinach F.C."/>
            <person name="Farah C.S."/>
            <person name="Furlan L.R."/>
            <person name="Quaggio R.B."/>
            <person name="Monteiro-Vitorello C.B."/>
            <person name="Van Sluys M.A."/>
            <person name="Almeida N.F. Jr."/>
            <person name="Alves L.M.C."/>
            <person name="do Amaral A.M."/>
            <person name="Bertolini M.C."/>
            <person name="Camargo L.E.A."/>
            <person name="Camarotte G."/>
            <person name="Cannavan F."/>
            <person name="Cardozo J."/>
            <person name="Chambergo F."/>
            <person name="Ciapina L.P."/>
            <person name="Cicarelli R.M.B."/>
            <person name="Coutinho L.L."/>
            <person name="Cursino-Santos J.R."/>
            <person name="El-Dorry H."/>
            <person name="Faria J.B."/>
            <person name="Ferreira A.J.S."/>
            <person name="Ferreira R.C.C."/>
            <person name="Ferro M.I.T."/>
            <person name="Formighieri E.F."/>
            <person name="Franco M.C."/>
            <person name="Greggio C.C."/>
            <person name="Gruber A."/>
            <person name="Katsuyama A.M."/>
            <person name="Kishi L.T."/>
            <person name="Leite R.P."/>
            <person name="Lemos E.G.M."/>
            <person name="Lemos M.V.F."/>
            <person name="Locali E.C."/>
            <person name="Machado M.A."/>
            <person name="Madeira A.M.B.N."/>
            <person name="Martinez-Rossi N.M."/>
            <person name="Martins E.C."/>
            <person name="Meidanis J."/>
            <person name="Menck C.F.M."/>
            <person name="Miyaki C.Y."/>
            <person name="Moon D.H."/>
            <person name="Moreira L.M."/>
            <person name="Novo M.T.M."/>
            <person name="Okura V.K."/>
            <person name="Oliveira M.C."/>
            <person name="Oliveira V.R."/>
            <person name="Pereira H.A."/>
            <person name="Rossi A."/>
            <person name="Sena J.A.D."/>
            <person name="Silva C."/>
            <person name="de Souza R.F."/>
            <person name="Spinola L.A.F."/>
            <person name="Takita M.A."/>
            <person name="Tamura R.E."/>
            <person name="Teixeira E.C."/>
            <person name="Tezza R.I.D."/>
            <person name="Trindade dos Santos M."/>
            <person name="Truffi D."/>
            <person name="Tsai S.M."/>
            <person name="White F.F."/>
            <person name="Setubal J.C."/>
            <person name="Kitajima J.P."/>
        </authorList>
    </citation>
    <scope>NUCLEOTIDE SEQUENCE [LARGE SCALE GENOMIC DNA]</scope>
    <source>
        <strain>ATCC 33913 / DSM 3586 / NCPPB 528 / LMG 568 / P 25</strain>
    </source>
</reference>
<reference key="3">
    <citation type="journal article" date="2000" name="J. Bacteriol.">
        <title>Association of the cytoplasmic membrane protein XpsN with the outer membrane protein XpsD in the type II protein secretion apparatus of Xanthomonas campestris pv. campestris.</title>
        <authorList>
            <person name="Lee H.-M."/>
            <person name="Wang K.-C."/>
            <person name="Liu Y.-L."/>
            <person name="Yew H.-Y."/>
            <person name="Chen L.-Y."/>
            <person name="Leu W.-M."/>
            <person name="Chen D.C."/>
            <person name="Hu N.-T."/>
        </authorList>
    </citation>
    <scope>INTERACTION WITH XPSN</scope>
</reference>
<keyword id="KW-0998">Cell outer membrane</keyword>
<keyword id="KW-0449">Lipoprotein</keyword>
<keyword id="KW-0472">Membrane</keyword>
<keyword id="KW-0564">Palmitate</keyword>
<keyword id="KW-0653">Protein transport</keyword>
<keyword id="KW-1185">Reference proteome</keyword>
<keyword id="KW-0732">Signal</keyword>
<keyword id="KW-0812">Transmembrane</keyword>
<keyword id="KW-1134">Transmembrane beta strand</keyword>
<keyword id="KW-0813">Transport</keyword>
<gene>
    <name type="primary">xpsD</name>
    <name type="synonym">pefD</name>
    <name type="ordered locus">XCC0670</name>
</gene>
<accession>P29041</accession>
<accession>P31763</accession>
<protein>
    <recommendedName>
        <fullName>Secretin XpsD</fullName>
    </recommendedName>
    <alternativeName>
        <fullName>General secretion pathway protein D</fullName>
    </alternativeName>
    <alternativeName>
        <fullName>Type II secretion system protein D</fullName>
        <shortName>T2SS protein D</shortName>
    </alternativeName>
</protein>
<comment type="function">
    <text evidence="1">Involved in a type II secretion system (T2SS, formerly general secretion pathway, GSP) for the export of proteins. This subunit forms the outer membrane channel.</text>
</comment>
<comment type="subunit">
    <text evidence="1 4">Forms a cylindrical channel with 15 subunits (By similarity). Binds to XpsN (PubMed:10692359).</text>
</comment>
<comment type="subcellular location">
    <subcellularLocation>
        <location evidence="1">Cell outer membrane</location>
    </subcellularLocation>
    <text evidence="1">Most of the protein is in the periplasm which it traverses to contact proteins of the cell inner membrane.</text>
</comment>
<comment type="domain">
    <text evidence="1">The N0, N1, N2 and N3 domains are periplasmic, while the secretin and S domains form a channel that is partially inserted in the outer membrane. The N1, N2 and N3 domains each form a periplasmic ring. The secretin domain forms a double beta-barrel structure; the outer barrel has a diameter of about 110 Angstroms while the inner barrel forms the central gate with a small pore in the closed state.</text>
</comment>
<comment type="similarity">
    <text evidence="5">Belongs to the bacterial secretin family. GSP D subfamily.</text>
</comment>